<keyword id="KW-0687">Ribonucleoprotein</keyword>
<keyword id="KW-0689">Ribosomal protein</keyword>
<keyword id="KW-0694">RNA-binding</keyword>
<keyword id="KW-0699">rRNA-binding</keyword>
<evidence type="ECO:0000255" key="1">
    <source>
        <dbReference type="HAMAP-Rule" id="MF_00500"/>
    </source>
</evidence>
<evidence type="ECO:0000256" key="2">
    <source>
        <dbReference type="SAM" id="MobiDB-lite"/>
    </source>
</evidence>
<evidence type="ECO:0000305" key="3"/>
<proteinExistence type="inferred from homology"/>
<comment type="function">
    <text evidence="1">Binds directly to 16S ribosomal RNA.</text>
</comment>
<comment type="similarity">
    <text evidence="1">Belongs to the bacterial ribosomal protein bS20 family.</text>
</comment>
<dbReference type="EMBL" id="AL157959">
    <property type="protein sequence ID" value="CAM09127.1"/>
    <property type="molecule type" value="Genomic_DNA"/>
</dbReference>
<dbReference type="RefSeq" id="WP_002212556.1">
    <property type="nucleotide sequence ID" value="NC_003116.1"/>
</dbReference>
<dbReference type="SMR" id="P66507"/>
<dbReference type="EnsemblBacteria" id="CAM09127">
    <property type="protein sequence ID" value="CAM09127"/>
    <property type="gene ID" value="NMA2022"/>
</dbReference>
<dbReference type="GeneID" id="93387558"/>
<dbReference type="KEGG" id="nma:NMA2022"/>
<dbReference type="HOGENOM" id="CLU_160655_4_0_4"/>
<dbReference type="Proteomes" id="UP000000626">
    <property type="component" value="Chromosome"/>
</dbReference>
<dbReference type="GO" id="GO:0005829">
    <property type="term" value="C:cytosol"/>
    <property type="evidence" value="ECO:0007669"/>
    <property type="project" value="TreeGrafter"/>
</dbReference>
<dbReference type="GO" id="GO:0015935">
    <property type="term" value="C:small ribosomal subunit"/>
    <property type="evidence" value="ECO:0007669"/>
    <property type="project" value="TreeGrafter"/>
</dbReference>
<dbReference type="GO" id="GO:0070181">
    <property type="term" value="F:small ribosomal subunit rRNA binding"/>
    <property type="evidence" value="ECO:0007669"/>
    <property type="project" value="TreeGrafter"/>
</dbReference>
<dbReference type="GO" id="GO:0003735">
    <property type="term" value="F:structural constituent of ribosome"/>
    <property type="evidence" value="ECO:0007669"/>
    <property type="project" value="InterPro"/>
</dbReference>
<dbReference type="GO" id="GO:0006412">
    <property type="term" value="P:translation"/>
    <property type="evidence" value="ECO:0007669"/>
    <property type="project" value="UniProtKB-UniRule"/>
</dbReference>
<dbReference type="FunFam" id="1.20.58.110:FF:000001">
    <property type="entry name" value="30S ribosomal protein S20"/>
    <property type="match status" value="1"/>
</dbReference>
<dbReference type="Gene3D" id="1.20.58.110">
    <property type="entry name" value="Ribosomal protein S20"/>
    <property type="match status" value="1"/>
</dbReference>
<dbReference type="HAMAP" id="MF_00500">
    <property type="entry name" value="Ribosomal_bS20"/>
    <property type="match status" value="1"/>
</dbReference>
<dbReference type="InterPro" id="IPR002583">
    <property type="entry name" value="Ribosomal_bS20"/>
</dbReference>
<dbReference type="InterPro" id="IPR036510">
    <property type="entry name" value="Ribosomal_bS20_sf"/>
</dbReference>
<dbReference type="NCBIfam" id="TIGR00029">
    <property type="entry name" value="S20"/>
    <property type="match status" value="1"/>
</dbReference>
<dbReference type="PANTHER" id="PTHR33398">
    <property type="entry name" value="30S RIBOSOMAL PROTEIN S20"/>
    <property type="match status" value="1"/>
</dbReference>
<dbReference type="PANTHER" id="PTHR33398:SF1">
    <property type="entry name" value="SMALL RIBOSOMAL SUBUNIT PROTEIN BS20C"/>
    <property type="match status" value="1"/>
</dbReference>
<dbReference type="Pfam" id="PF01649">
    <property type="entry name" value="Ribosomal_S20p"/>
    <property type="match status" value="1"/>
</dbReference>
<dbReference type="SUPFAM" id="SSF46992">
    <property type="entry name" value="Ribosomal protein S20"/>
    <property type="match status" value="1"/>
</dbReference>
<feature type="chain" id="PRO_0000167998" description="Small ribosomal subunit protein bS20">
    <location>
        <begin position="1"/>
        <end position="87"/>
    </location>
</feature>
<feature type="region of interest" description="Disordered" evidence="2">
    <location>
        <begin position="1"/>
        <end position="22"/>
    </location>
</feature>
<feature type="compositionally biased region" description="Basic residues" evidence="2">
    <location>
        <begin position="7"/>
        <end position="19"/>
    </location>
</feature>
<accession>P66507</accession>
<accession>A1ITL0</accession>
<accession>Q9JQM6</accession>
<sequence length="87" mass="9508">MANSAQARKRARQSVKQRAHNASLRTAFRTAVKKVLKAVEAGDKAAAQAVYQESVKVIDRIADKGVFHKNKAARHKSRLSAKVKALA</sequence>
<organism>
    <name type="scientific">Neisseria meningitidis serogroup A / serotype 4A (strain DSM 15465 / Z2491)</name>
    <dbReference type="NCBI Taxonomy" id="122587"/>
    <lineage>
        <taxon>Bacteria</taxon>
        <taxon>Pseudomonadati</taxon>
        <taxon>Pseudomonadota</taxon>
        <taxon>Betaproteobacteria</taxon>
        <taxon>Neisseriales</taxon>
        <taxon>Neisseriaceae</taxon>
        <taxon>Neisseria</taxon>
    </lineage>
</organism>
<reference key="1">
    <citation type="journal article" date="2000" name="Nature">
        <title>Complete DNA sequence of a serogroup A strain of Neisseria meningitidis Z2491.</title>
        <authorList>
            <person name="Parkhill J."/>
            <person name="Achtman M."/>
            <person name="James K.D."/>
            <person name="Bentley S.D."/>
            <person name="Churcher C.M."/>
            <person name="Klee S.R."/>
            <person name="Morelli G."/>
            <person name="Basham D."/>
            <person name="Brown D."/>
            <person name="Chillingworth T."/>
            <person name="Davies R.M."/>
            <person name="Davis P."/>
            <person name="Devlin K."/>
            <person name="Feltwell T."/>
            <person name="Hamlin N."/>
            <person name="Holroyd S."/>
            <person name="Jagels K."/>
            <person name="Leather S."/>
            <person name="Moule S."/>
            <person name="Mungall K.L."/>
            <person name="Quail M.A."/>
            <person name="Rajandream M.A."/>
            <person name="Rutherford K.M."/>
            <person name="Simmonds M."/>
            <person name="Skelton J."/>
            <person name="Whitehead S."/>
            <person name="Spratt B.G."/>
            <person name="Barrell B.G."/>
        </authorList>
    </citation>
    <scope>NUCLEOTIDE SEQUENCE [LARGE SCALE GENOMIC DNA]</scope>
    <source>
        <strain>DSM 15465 / Z2491</strain>
    </source>
</reference>
<gene>
    <name evidence="1" type="primary">rpsT</name>
    <name type="ordered locus">NMA2022</name>
</gene>
<protein>
    <recommendedName>
        <fullName evidence="1">Small ribosomal subunit protein bS20</fullName>
    </recommendedName>
    <alternativeName>
        <fullName evidence="3">30S ribosomal protein S20</fullName>
    </alternativeName>
</protein>
<name>RS20_NEIMA</name>